<dbReference type="EC" id="3.1.1.29" evidence="1"/>
<dbReference type="EMBL" id="CP001120">
    <property type="protein sequence ID" value="ACF68649.1"/>
    <property type="molecule type" value="Genomic_DNA"/>
</dbReference>
<dbReference type="RefSeq" id="WP_001531571.1">
    <property type="nucleotide sequence ID" value="NC_011083.1"/>
</dbReference>
<dbReference type="SMR" id="B4TKB3"/>
<dbReference type="KEGG" id="seh:SeHA_C1980"/>
<dbReference type="HOGENOM" id="CLU_062456_3_1_6"/>
<dbReference type="Proteomes" id="UP000001866">
    <property type="component" value="Chromosome"/>
</dbReference>
<dbReference type="GO" id="GO:0005737">
    <property type="term" value="C:cytoplasm"/>
    <property type="evidence" value="ECO:0007669"/>
    <property type="project" value="UniProtKB-SubCell"/>
</dbReference>
<dbReference type="GO" id="GO:0004045">
    <property type="term" value="F:peptidyl-tRNA hydrolase activity"/>
    <property type="evidence" value="ECO:0007669"/>
    <property type="project" value="UniProtKB-UniRule"/>
</dbReference>
<dbReference type="GO" id="GO:0000049">
    <property type="term" value="F:tRNA binding"/>
    <property type="evidence" value="ECO:0007669"/>
    <property type="project" value="UniProtKB-UniRule"/>
</dbReference>
<dbReference type="GO" id="GO:0006515">
    <property type="term" value="P:protein quality control for misfolded or incompletely synthesized proteins"/>
    <property type="evidence" value="ECO:0007669"/>
    <property type="project" value="UniProtKB-UniRule"/>
</dbReference>
<dbReference type="GO" id="GO:0072344">
    <property type="term" value="P:rescue of stalled ribosome"/>
    <property type="evidence" value="ECO:0007669"/>
    <property type="project" value="UniProtKB-UniRule"/>
</dbReference>
<dbReference type="CDD" id="cd00462">
    <property type="entry name" value="PTH"/>
    <property type="match status" value="1"/>
</dbReference>
<dbReference type="FunFam" id="3.40.50.1470:FF:000001">
    <property type="entry name" value="Peptidyl-tRNA hydrolase"/>
    <property type="match status" value="1"/>
</dbReference>
<dbReference type="Gene3D" id="3.40.50.1470">
    <property type="entry name" value="Peptidyl-tRNA hydrolase"/>
    <property type="match status" value="1"/>
</dbReference>
<dbReference type="HAMAP" id="MF_00083">
    <property type="entry name" value="Pept_tRNA_hydro_bact"/>
    <property type="match status" value="1"/>
</dbReference>
<dbReference type="InterPro" id="IPR001328">
    <property type="entry name" value="Pept_tRNA_hydro"/>
</dbReference>
<dbReference type="InterPro" id="IPR018171">
    <property type="entry name" value="Pept_tRNA_hydro_CS"/>
</dbReference>
<dbReference type="InterPro" id="IPR036416">
    <property type="entry name" value="Pept_tRNA_hydro_sf"/>
</dbReference>
<dbReference type="NCBIfam" id="TIGR00447">
    <property type="entry name" value="pth"/>
    <property type="match status" value="1"/>
</dbReference>
<dbReference type="PANTHER" id="PTHR17224">
    <property type="entry name" value="PEPTIDYL-TRNA HYDROLASE"/>
    <property type="match status" value="1"/>
</dbReference>
<dbReference type="PANTHER" id="PTHR17224:SF1">
    <property type="entry name" value="PEPTIDYL-TRNA HYDROLASE"/>
    <property type="match status" value="1"/>
</dbReference>
<dbReference type="Pfam" id="PF01195">
    <property type="entry name" value="Pept_tRNA_hydro"/>
    <property type="match status" value="1"/>
</dbReference>
<dbReference type="SUPFAM" id="SSF53178">
    <property type="entry name" value="Peptidyl-tRNA hydrolase-like"/>
    <property type="match status" value="1"/>
</dbReference>
<dbReference type="PROSITE" id="PS01195">
    <property type="entry name" value="PEPT_TRNA_HYDROL_1"/>
    <property type="match status" value="1"/>
</dbReference>
<dbReference type="PROSITE" id="PS01196">
    <property type="entry name" value="PEPT_TRNA_HYDROL_2"/>
    <property type="match status" value="1"/>
</dbReference>
<feature type="chain" id="PRO_1000092982" description="Peptidyl-tRNA hydrolase">
    <location>
        <begin position="1"/>
        <end position="194"/>
    </location>
</feature>
<feature type="active site" description="Proton acceptor" evidence="1">
    <location>
        <position position="21"/>
    </location>
</feature>
<feature type="binding site" evidence="1">
    <location>
        <position position="16"/>
    </location>
    <ligand>
        <name>tRNA</name>
        <dbReference type="ChEBI" id="CHEBI:17843"/>
    </ligand>
</feature>
<feature type="binding site" evidence="1">
    <location>
        <position position="67"/>
    </location>
    <ligand>
        <name>tRNA</name>
        <dbReference type="ChEBI" id="CHEBI:17843"/>
    </ligand>
</feature>
<feature type="binding site" evidence="1">
    <location>
        <position position="69"/>
    </location>
    <ligand>
        <name>tRNA</name>
        <dbReference type="ChEBI" id="CHEBI:17843"/>
    </ligand>
</feature>
<feature type="binding site" evidence="1">
    <location>
        <position position="115"/>
    </location>
    <ligand>
        <name>tRNA</name>
        <dbReference type="ChEBI" id="CHEBI:17843"/>
    </ligand>
</feature>
<feature type="site" description="Discriminates between blocked and unblocked aminoacyl-tRNA" evidence="1">
    <location>
        <position position="11"/>
    </location>
</feature>
<feature type="site" description="Stabilizes the basic form of H active site to accept a proton" evidence="1">
    <location>
        <position position="94"/>
    </location>
</feature>
<evidence type="ECO:0000255" key="1">
    <source>
        <dbReference type="HAMAP-Rule" id="MF_00083"/>
    </source>
</evidence>
<accession>B4TKB3</accession>
<proteinExistence type="inferred from homology"/>
<comment type="function">
    <text evidence="1">Hydrolyzes ribosome-free peptidyl-tRNAs (with 1 or more amino acids incorporated), which drop off the ribosome during protein synthesis, or as a result of ribosome stalling.</text>
</comment>
<comment type="function">
    <text evidence="1">Catalyzes the release of premature peptidyl moieties from peptidyl-tRNA molecules trapped in stalled 50S ribosomal subunits, and thus maintains levels of free tRNAs and 50S ribosomes.</text>
</comment>
<comment type="catalytic activity">
    <reaction evidence="1">
        <text>an N-acyl-L-alpha-aminoacyl-tRNA + H2O = an N-acyl-L-amino acid + a tRNA + H(+)</text>
        <dbReference type="Rhea" id="RHEA:54448"/>
        <dbReference type="Rhea" id="RHEA-COMP:10123"/>
        <dbReference type="Rhea" id="RHEA-COMP:13883"/>
        <dbReference type="ChEBI" id="CHEBI:15377"/>
        <dbReference type="ChEBI" id="CHEBI:15378"/>
        <dbReference type="ChEBI" id="CHEBI:59874"/>
        <dbReference type="ChEBI" id="CHEBI:78442"/>
        <dbReference type="ChEBI" id="CHEBI:138191"/>
        <dbReference type="EC" id="3.1.1.29"/>
    </reaction>
</comment>
<comment type="subunit">
    <text evidence="1">Monomer.</text>
</comment>
<comment type="subcellular location">
    <subcellularLocation>
        <location evidence="1">Cytoplasm</location>
    </subcellularLocation>
</comment>
<comment type="similarity">
    <text evidence="1">Belongs to the PTH family.</text>
</comment>
<name>PTH_SALHS</name>
<organism>
    <name type="scientific">Salmonella heidelberg (strain SL476)</name>
    <dbReference type="NCBI Taxonomy" id="454169"/>
    <lineage>
        <taxon>Bacteria</taxon>
        <taxon>Pseudomonadati</taxon>
        <taxon>Pseudomonadota</taxon>
        <taxon>Gammaproteobacteria</taxon>
        <taxon>Enterobacterales</taxon>
        <taxon>Enterobacteriaceae</taxon>
        <taxon>Salmonella</taxon>
    </lineage>
</organism>
<reference key="1">
    <citation type="journal article" date="2011" name="J. Bacteriol.">
        <title>Comparative genomics of 28 Salmonella enterica isolates: evidence for CRISPR-mediated adaptive sublineage evolution.</title>
        <authorList>
            <person name="Fricke W.F."/>
            <person name="Mammel M.K."/>
            <person name="McDermott P.F."/>
            <person name="Tartera C."/>
            <person name="White D.G."/>
            <person name="Leclerc J.E."/>
            <person name="Ravel J."/>
            <person name="Cebula T.A."/>
        </authorList>
    </citation>
    <scope>NUCLEOTIDE SEQUENCE [LARGE SCALE GENOMIC DNA]</scope>
    <source>
        <strain>SL476</strain>
    </source>
</reference>
<keyword id="KW-0963">Cytoplasm</keyword>
<keyword id="KW-0378">Hydrolase</keyword>
<keyword id="KW-0694">RNA-binding</keyword>
<keyword id="KW-0820">tRNA-binding</keyword>
<sequence length="194" mass="21199">MAIKLIVGLANPGAEYAATRHNAGAWYVDLLAERLRAPLREEPKFFGYTSRITLEGEDVRLLVPTTFMNLSGKAVGAMASFYRIQPDEILVAHDELDLPPGVAKFKLGGGHGGHNGLKDIISKLGNNPNFHRLRVGIGHPGDKSKVVGFVLGKPPVSEQKLIDEAIYEAARCTELWFKEGLAKATSRLHTFKAQ</sequence>
<gene>
    <name evidence="1" type="primary">pth</name>
    <name type="ordered locus">SeHA_C1980</name>
</gene>
<protein>
    <recommendedName>
        <fullName evidence="1">Peptidyl-tRNA hydrolase</fullName>
        <shortName evidence="1">Pth</shortName>
        <ecNumber evidence="1">3.1.1.29</ecNumber>
    </recommendedName>
</protein>